<protein>
    <recommendedName>
        <fullName evidence="1">Galactose/methyl galactoside import ATP-binding protein MglA</fullName>
        <ecNumber evidence="1">7.5.2.11</ecNumber>
    </recommendedName>
</protein>
<dbReference type="EC" id="7.5.2.11" evidence="1"/>
<dbReference type="EMBL" id="AE015927">
    <property type="protein sequence ID" value="AAO35458.1"/>
    <property type="molecule type" value="Genomic_DNA"/>
</dbReference>
<dbReference type="RefSeq" id="WP_011099120.1">
    <property type="nucleotide sequence ID" value="NC_004557.1"/>
</dbReference>
<dbReference type="SMR" id="Q896Y2"/>
<dbReference type="STRING" id="212717.CTC_00861"/>
<dbReference type="GeneID" id="24253069"/>
<dbReference type="KEGG" id="ctc:CTC_00861"/>
<dbReference type="HOGENOM" id="CLU_000604_92_3_9"/>
<dbReference type="OrthoDB" id="9771863at2"/>
<dbReference type="Proteomes" id="UP000001412">
    <property type="component" value="Chromosome"/>
</dbReference>
<dbReference type="GO" id="GO:0005886">
    <property type="term" value="C:plasma membrane"/>
    <property type="evidence" value="ECO:0007669"/>
    <property type="project" value="UniProtKB-SubCell"/>
</dbReference>
<dbReference type="GO" id="GO:0005524">
    <property type="term" value="F:ATP binding"/>
    <property type="evidence" value="ECO:0007669"/>
    <property type="project" value="UniProtKB-KW"/>
</dbReference>
<dbReference type="GO" id="GO:0016887">
    <property type="term" value="F:ATP hydrolysis activity"/>
    <property type="evidence" value="ECO:0007669"/>
    <property type="project" value="InterPro"/>
</dbReference>
<dbReference type="CDD" id="cd03216">
    <property type="entry name" value="ABC_Carb_Monos_I"/>
    <property type="match status" value="1"/>
</dbReference>
<dbReference type="CDD" id="cd03215">
    <property type="entry name" value="ABC_Carb_Monos_II"/>
    <property type="match status" value="1"/>
</dbReference>
<dbReference type="FunFam" id="3.40.50.300:FF:000126">
    <property type="entry name" value="Galactose/methyl galactoside import ATP-binding protein MglA"/>
    <property type="match status" value="1"/>
</dbReference>
<dbReference type="FunFam" id="3.40.50.300:FF:000127">
    <property type="entry name" value="Ribose import ATP-binding protein RbsA"/>
    <property type="match status" value="1"/>
</dbReference>
<dbReference type="Gene3D" id="3.40.50.300">
    <property type="entry name" value="P-loop containing nucleotide triphosphate hydrolases"/>
    <property type="match status" value="2"/>
</dbReference>
<dbReference type="InterPro" id="IPR003593">
    <property type="entry name" value="AAA+_ATPase"/>
</dbReference>
<dbReference type="InterPro" id="IPR050107">
    <property type="entry name" value="ABC_carbohydrate_import_ATPase"/>
</dbReference>
<dbReference type="InterPro" id="IPR003439">
    <property type="entry name" value="ABC_transporter-like_ATP-bd"/>
</dbReference>
<dbReference type="InterPro" id="IPR017871">
    <property type="entry name" value="ABC_transporter-like_CS"/>
</dbReference>
<dbReference type="InterPro" id="IPR027417">
    <property type="entry name" value="P-loop_NTPase"/>
</dbReference>
<dbReference type="PANTHER" id="PTHR43790">
    <property type="entry name" value="CARBOHYDRATE TRANSPORT ATP-BINDING PROTEIN MG119-RELATED"/>
    <property type="match status" value="1"/>
</dbReference>
<dbReference type="PANTHER" id="PTHR43790:SF7">
    <property type="entry name" value="GALACTOSE_METHYL GALACTOSIDE IMPORT ATP-BINDING PROTEIN MGLA"/>
    <property type="match status" value="1"/>
</dbReference>
<dbReference type="Pfam" id="PF00005">
    <property type="entry name" value="ABC_tran"/>
    <property type="match status" value="2"/>
</dbReference>
<dbReference type="SMART" id="SM00382">
    <property type="entry name" value="AAA"/>
    <property type="match status" value="2"/>
</dbReference>
<dbReference type="SUPFAM" id="SSF52540">
    <property type="entry name" value="P-loop containing nucleoside triphosphate hydrolases"/>
    <property type="match status" value="2"/>
</dbReference>
<dbReference type="PROSITE" id="PS00211">
    <property type="entry name" value="ABC_TRANSPORTER_1"/>
    <property type="match status" value="1"/>
</dbReference>
<dbReference type="PROSITE" id="PS50893">
    <property type="entry name" value="ABC_TRANSPORTER_2"/>
    <property type="match status" value="2"/>
</dbReference>
<dbReference type="PROSITE" id="PS51260">
    <property type="entry name" value="MGLA"/>
    <property type="match status" value="1"/>
</dbReference>
<name>MGLA_CLOTE</name>
<organism>
    <name type="scientific">Clostridium tetani (strain Massachusetts / E88)</name>
    <dbReference type="NCBI Taxonomy" id="212717"/>
    <lineage>
        <taxon>Bacteria</taxon>
        <taxon>Bacillati</taxon>
        <taxon>Bacillota</taxon>
        <taxon>Clostridia</taxon>
        <taxon>Eubacteriales</taxon>
        <taxon>Clostridiaceae</taxon>
        <taxon>Clostridium</taxon>
    </lineage>
</organism>
<feature type="chain" id="PRO_0000261362" description="Galactose/methyl galactoside import ATP-binding protein MglA">
    <location>
        <begin position="1"/>
        <end position="504"/>
    </location>
</feature>
<feature type="domain" description="ABC transporter 1" evidence="1">
    <location>
        <begin position="8"/>
        <end position="247"/>
    </location>
</feature>
<feature type="domain" description="ABC transporter 2" evidence="1">
    <location>
        <begin position="258"/>
        <end position="504"/>
    </location>
</feature>
<feature type="binding site" evidence="1">
    <location>
        <begin position="40"/>
        <end position="47"/>
    </location>
    <ligand>
        <name>ATP</name>
        <dbReference type="ChEBI" id="CHEBI:30616"/>
    </ligand>
</feature>
<gene>
    <name evidence="1" type="primary">mglA</name>
    <name type="ordered locus">CTC_00861</name>
</gene>
<keyword id="KW-0067">ATP-binding</keyword>
<keyword id="KW-1003">Cell membrane</keyword>
<keyword id="KW-0472">Membrane</keyword>
<keyword id="KW-0547">Nucleotide-binding</keyword>
<keyword id="KW-1185">Reference proteome</keyword>
<keyword id="KW-0677">Repeat</keyword>
<keyword id="KW-0762">Sugar transport</keyword>
<keyword id="KW-1278">Translocase</keyword>
<keyword id="KW-0813">Transport</keyword>
<accession>Q896Y2</accession>
<reference key="1">
    <citation type="journal article" date="2003" name="Proc. Natl. Acad. Sci. U.S.A.">
        <title>The genome sequence of Clostridium tetani, the causative agent of tetanus disease.</title>
        <authorList>
            <person name="Brueggemann H."/>
            <person name="Baeumer S."/>
            <person name="Fricke W.F."/>
            <person name="Wiezer A."/>
            <person name="Liesegang H."/>
            <person name="Decker I."/>
            <person name="Herzberg C."/>
            <person name="Martinez-Arias R."/>
            <person name="Merkl R."/>
            <person name="Henne A."/>
            <person name="Gottschalk G."/>
        </authorList>
    </citation>
    <scope>NUCLEOTIDE SEQUENCE [LARGE SCALE GENOMIC DNA]</scope>
    <source>
        <strain>Massachusetts / E88</strain>
    </source>
</reference>
<sequence length="504" mass="56052">MVENNIILEMNGISKNFPGVKALDGVDLKVKKGTVHALMGENGAGKSTLMKCLFGIYRSDDGEIVLGGKKVQFKNAKDALENGISMIHQELHPVPHRSVMENVWLGRFPVKKVFGLGIVDHKKMYEDTKDLLGKLKMNIDPNTLVSKLSVSQVQGLEIAKAVSYNSKIIVMDEPTSSLTENEVTHLFNIISDLKNQGVAIIYISHKMEEILKIADEVTIMRDGKYIGTWEAEGLTTDLIISKMVGRDLTNRFPPKENTPGEVIMKVENLTSANNKSFKDISFELRKGEILGIGGLVGAQRTELVESIFGLRKIETGKIYINGQEVKIKSPINSKKYGIALLTEERRSTGIFPVLTVGDNTIIAGLDKYIDLKFVVNQKRGMKDIKNSIEKLNIRTPSHATQIKNLSGGNQQKVIFSRWLLTEPDVLIMDEPTRGIDVGAKYEIYSIISDLSKMGKSIIMISSEMPELIGMSDRIMIMCDGRLSGIIEGEEATQEEIMKYATRFI</sequence>
<comment type="function">
    <text evidence="1">Part of the ABC transporter complex MglABC involved in galactose/methyl galactoside import. Responsible for energy coupling to the transport system.</text>
</comment>
<comment type="catalytic activity">
    <reaction evidence="1">
        <text>D-galactose(out) + ATP + H2O = D-galactose(in) + ADP + phosphate + H(+)</text>
        <dbReference type="Rhea" id="RHEA:60156"/>
        <dbReference type="ChEBI" id="CHEBI:4139"/>
        <dbReference type="ChEBI" id="CHEBI:15377"/>
        <dbReference type="ChEBI" id="CHEBI:15378"/>
        <dbReference type="ChEBI" id="CHEBI:30616"/>
        <dbReference type="ChEBI" id="CHEBI:43474"/>
        <dbReference type="ChEBI" id="CHEBI:456216"/>
        <dbReference type="EC" id="7.5.2.11"/>
    </reaction>
    <physiologicalReaction direction="left-to-right" evidence="1">
        <dbReference type="Rhea" id="RHEA:60157"/>
    </physiologicalReaction>
</comment>
<comment type="catalytic activity">
    <reaction evidence="1">
        <text>methyl beta-D-galactoside(out) + ATP + H2O = methyl beta-D-galactoside(in) + ADP + phosphate + H(+)</text>
        <dbReference type="Rhea" id="RHEA:72531"/>
        <dbReference type="ChEBI" id="CHEBI:15377"/>
        <dbReference type="ChEBI" id="CHEBI:15378"/>
        <dbReference type="ChEBI" id="CHEBI:17540"/>
        <dbReference type="ChEBI" id="CHEBI:30616"/>
        <dbReference type="ChEBI" id="CHEBI:43474"/>
        <dbReference type="ChEBI" id="CHEBI:456216"/>
    </reaction>
    <physiologicalReaction direction="left-to-right" evidence="1">
        <dbReference type="Rhea" id="RHEA:72532"/>
    </physiologicalReaction>
</comment>
<comment type="subunit">
    <text evidence="1">The complex is composed of one ATP-binding protein (MglA), two transmembrane proteins (MglC) and a solute-binding protein (MglB).</text>
</comment>
<comment type="subcellular location">
    <subcellularLocation>
        <location evidence="1">Cell membrane</location>
        <topology evidence="1">Peripheral membrane protein</topology>
    </subcellularLocation>
</comment>
<comment type="similarity">
    <text evidence="1">Belongs to the ABC transporter superfamily. Galactose/methyl galactoside importer (TC 3.A.1.2.3) family.</text>
</comment>
<evidence type="ECO:0000255" key="1">
    <source>
        <dbReference type="HAMAP-Rule" id="MF_01717"/>
    </source>
</evidence>
<proteinExistence type="inferred from homology"/>